<accession>C1AL40</accession>
<reference key="1">
    <citation type="journal article" date="2009" name="Vaccine">
        <title>Whole genome sequence analysis of Mycobacterium bovis bacillus Calmette-Guerin (BCG) Tokyo 172: a comparative study of BCG vaccine substrains.</title>
        <authorList>
            <person name="Seki M."/>
            <person name="Honda I."/>
            <person name="Fujita I."/>
            <person name="Yano I."/>
            <person name="Yamamoto S."/>
            <person name="Koyama A."/>
        </authorList>
    </citation>
    <scope>NUCLEOTIDE SEQUENCE [LARGE SCALE GENOMIC DNA]</scope>
    <source>
        <strain>BCG / Tokyo 172 / ATCC 35737 / TMC 1019</strain>
    </source>
</reference>
<dbReference type="EMBL" id="AP010918">
    <property type="protein sequence ID" value="BAH25019.1"/>
    <property type="molecule type" value="Genomic_DNA"/>
</dbReference>
<dbReference type="RefSeq" id="WP_003403587.1">
    <property type="nucleotide sequence ID" value="NZ_CP014566.1"/>
</dbReference>
<dbReference type="SMR" id="C1AL40"/>
<dbReference type="KEGG" id="mbt:JTY_0726"/>
<dbReference type="HOGENOM" id="CLU_083987_1_0_11"/>
<dbReference type="GO" id="GO:0022625">
    <property type="term" value="C:cytosolic large ribosomal subunit"/>
    <property type="evidence" value="ECO:0007669"/>
    <property type="project" value="TreeGrafter"/>
</dbReference>
<dbReference type="GO" id="GO:0019843">
    <property type="term" value="F:rRNA binding"/>
    <property type="evidence" value="ECO:0007669"/>
    <property type="project" value="UniProtKB-UniRule"/>
</dbReference>
<dbReference type="GO" id="GO:0003735">
    <property type="term" value="F:structural constituent of ribosome"/>
    <property type="evidence" value="ECO:0007669"/>
    <property type="project" value="InterPro"/>
</dbReference>
<dbReference type="GO" id="GO:0006412">
    <property type="term" value="P:translation"/>
    <property type="evidence" value="ECO:0007669"/>
    <property type="project" value="UniProtKB-UniRule"/>
</dbReference>
<dbReference type="CDD" id="cd00336">
    <property type="entry name" value="Ribosomal_L22"/>
    <property type="match status" value="1"/>
</dbReference>
<dbReference type="FunFam" id="3.90.470.10:FF:000002">
    <property type="entry name" value="50S ribosomal protein L22"/>
    <property type="match status" value="1"/>
</dbReference>
<dbReference type="Gene3D" id="3.90.470.10">
    <property type="entry name" value="Ribosomal protein L22/L17"/>
    <property type="match status" value="1"/>
</dbReference>
<dbReference type="HAMAP" id="MF_01331_B">
    <property type="entry name" value="Ribosomal_uL22_B"/>
    <property type="match status" value="1"/>
</dbReference>
<dbReference type="InterPro" id="IPR001063">
    <property type="entry name" value="Ribosomal_uL22"/>
</dbReference>
<dbReference type="InterPro" id="IPR005727">
    <property type="entry name" value="Ribosomal_uL22_bac/chlpt-type"/>
</dbReference>
<dbReference type="InterPro" id="IPR047867">
    <property type="entry name" value="Ribosomal_uL22_bac/org-type"/>
</dbReference>
<dbReference type="InterPro" id="IPR018260">
    <property type="entry name" value="Ribosomal_uL22_CS"/>
</dbReference>
<dbReference type="InterPro" id="IPR036394">
    <property type="entry name" value="Ribosomal_uL22_sf"/>
</dbReference>
<dbReference type="NCBIfam" id="TIGR01044">
    <property type="entry name" value="rplV_bact"/>
    <property type="match status" value="1"/>
</dbReference>
<dbReference type="PANTHER" id="PTHR13501">
    <property type="entry name" value="CHLOROPLAST 50S RIBOSOMAL PROTEIN L22-RELATED"/>
    <property type="match status" value="1"/>
</dbReference>
<dbReference type="PANTHER" id="PTHR13501:SF8">
    <property type="entry name" value="LARGE RIBOSOMAL SUBUNIT PROTEIN UL22M"/>
    <property type="match status" value="1"/>
</dbReference>
<dbReference type="Pfam" id="PF00237">
    <property type="entry name" value="Ribosomal_L22"/>
    <property type="match status" value="1"/>
</dbReference>
<dbReference type="SUPFAM" id="SSF54843">
    <property type="entry name" value="Ribosomal protein L22"/>
    <property type="match status" value="1"/>
</dbReference>
<dbReference type="PROSITE" id="PS00464">
    <property type="entry name" value="RIBOSOMAL_L22"/>
    <property type="match status" value="1"/>
</dbReference>
<proteinExistence type="inferred from homology"/>
<keyword id="KW-0687">Ribonucleoprotein</keyword>
<keyword id="KW-0689">Ribosomal protein</keyword>
<keyword id="KW-0694">RNA-binding</keyword>
<keyword id="KW-0699">rRNA-binding</keyword>
<protein>
    <recommendedName>
        <fullName evidence="1">Large ribosomal subunit protein uL22</fullName>
    </recommendedName>
    <alternativeName>
        <fullName evidence="3">50S ribosomal protein L22</fullName>
    </alternativeName>
</protein>
<sequence>MTAATKATEYPSAVAKARFVRVSPRKARRVIDLVRGRSVSDALDILRWAPQAASGPVAKVIASAAANAQNNGGLDPATLVVATVYADQGPTAKRIRPRAQGRAFRIRRRTSHITVVVESRPAKDQRSAKSSRARRTEASKAASKVGATAPAKKAAAKAPAKKAPASSGVKKTPAKKAPAKKAPAKASETSAAKGGSD</sequence>
<name>RL22_MYCBT</name>
<gene>
    <name evidence="1" type="primary">rplV</name>
    <name type="ordered locus">JTY_0726</name>
</gene>
<organism>
    <name type="scientific">Mycobacterium bovis (strain BCG / Tokyo 172 / ATCC 35737 / TMC 1019)</name>
    <dbReference type="NCBI Taxonomy" id="561275"/>
    <lineage>
        <taxon>Bacteria</taxon>
        <taxon>Bacillati</taxon>
        <taxon>Actinomycetota</taxon>
        <taxon>Actinomycetes</taxon>
        <taxon>Mycobacteriales</taxon>
        <taxon>Mycobacteriaceae</taxon>
        <taxon>Mycobacterium</taxon>
        <taxon>Mycobacterium tuberculosis complex</taxon>
    </lineage>
</organism>
<evidence type="ECO:0000255" key="1">
    <source>
        <dbReference type="HAMAP-Rule" id="MF_01331"/>
    </source>
</evidence>
<evidence type="ECO:0000256" key="2">
    <source>
        <dbReference type="SAM" id="MobiDB-lite"/>
    </source>
</evidence>
<evidence type="ECO:0000305" key="3"/>
<feature type="chain" id="PRO_1000166074" description="Large ribosomal subunit protein uL22">
    <location>
        <begin position="1"/>
        <end position="197"/>
    </location>
</feature>
<feature type="region of interest" description="Disordered" evidence="2">
    <location>
        <begin position="118"/>
        <end position="197"/>
    </location>
</feature>
<feature type="compositionally biased region" description="Low complexity" evidence="2">
    <location>
        <begin position="149"/>
        <end position="165"/>
    </location>
</feature>
<feature type="compositionally biased region" description="Basic residues" evidence="2">
    <location>
        <begin position="172"/>
        <end position="183"/>
    </location>
</feature>
<feature type="compositionally biased region" description="Low complexity" evidence="2">
    <location>
        <begin position="184"/>
        <end position="197"/>
    </location>
</feature>
<comment type="function">
    <text evidence="1">This protein binds specifically to 23S rRNA; its binding is stimulated by other ribosomal proteins, e.g. L4, L17, and L20. It is important during the early stages of 50S assembly. It makes multiple contacts with different domains of the 23S rRNA in the assembled 50S subunit and ribosome (By similarity).</text>
</comment>
<comment type="function">
    <text evidence="1">The globular domain of the protein is located near the polypeptide exit tunnel on the outside of the subunit, while an extended beta-hairpin is found that lines the wall of the exit tunnel in the center of the 70S ribosome.</text>
</comment>
<comment type="subunit">
    <text evidence="1">Part of the 50S ribosomal subunit.</text>
</comment>
<comment type="similarity">
    <text evidence="1">Belongs to the universal ribosomal protein uL22 family.</text>
</comment>